<protein>
    <recommendedName>
        <fullName evidence="1">UPF0335 protein Mpop_2872</fullName>
    </recommendedName>
</protein>
<comment type="similarity">
    <text evidence="1">Belongs to the UPF0335 family.</text>
</comment>
<reference key="1">
    <citation type="submission" date="2008-04" db="EMBL/GenBank/DDBJ databases">
        <title>Complete sequence of chromosome of Methylobacterium populi BJ001.</title>
        <authorList>
            <consortium name="US DOE Joint Genome Institute"/>
            <person name="Copeland A."/>
            <person name="Lucas S."/>
            <person name="Lapidus A."/>
            <person name="Glavina del Rio T."/>
            <person name="Dalin E."/>
            <person name="Tice H."/>
            <person name="Bruce D."/>
            <person name="Goodwin L."/>
            <person name="Pitluck S."/>
            <person name="Chertkov O."/>
            <person name="Brettin T."/>
            <person name="Detter J.C."/>
            <person name="Han C."/>
            <person name="Kuske C.R."/>
            <person name="Schmutz J."/>
            <person name="Larimer F."/>
            <person name="Land M."/>
            <person name="Hauser L."/>
            <person name="Kyrpides N."/>
            <person name="Mikhailova N."/>
            <person name="Marx C."/>
            <person name="Richardson P."/>
        </authorList>
    </citation>
    <scope>NUCLEOTIDE SEQUENCE [LARGE SCALE GENOMIC DNA]</scope>
    <source>
        <strain>ATCC BAA-705 / NCIMB 13946 / BJ001</strain>
    </source>
</reference>
<gene>
    <name type="ordered locus">Mpop_2872</name>
</gene>
<accession>B1ZEG3</accession>
<organism>
    <name type="scientific">Methylorubrum populi (strain ATCC BAA-705 / NCIMB 13946 / BJ001)</name>
    <name type="common">Methylobacterium populi</name>
    <dbReference type="NCBI Taxonomy" id="441620"/>
    <lineage>
        <taxon>Bacteria</taxon>
        <taxon>Pseudomonadati</taxon>
        <taxon>Pseudomonadota</taxon>
        <taxon>Alphaproteobacteria</taxon>
        <taxon>Hyphomicrobiales</taxon>
        <taxon>Methylobacteriaceae</taxon>
        <taxon>Methylorubrum</taxon>
    </lineage>
</organism>
<sequence>MAASPAPAVDPSSVAADQLKSIIERIERLEEEKAGIAGDIKDVYAEAKANGFDVKVLRKIISLRKRDHDERQEEEAILELYLQALGMA</sequence>
<feature type="chain" id="PRO_1000198478" description="UPF0335 protein Mpop_2872">
    <location>
        <begin position="1"/>
        <end position="88"/>
    </location>
</feature>
<evidence type="ECO:0000255" key="1">
    <source>
        <dbReference type="HAMAP-Rule" id="MF_00797"/>
    </source>
</evidence>
<dbReference type="EMBL" id="CP001029">
    <property type="protein sequence ID" value="ACB81027.1"/>
    <property type="molecule type" value="Genomic_DNA"/>
</dbReference>
<dbReference type="RefSeq" id="WP_003601858.1">
    <property type="nucleotide sequence ID" value="NC_010725.1"/>
</dbReference>
<dbReference type="SMR" id="B1ZEG3"/>
<dbReference type="STRING" id="441620.Mpop_2872"/>
<dbReference type="KEGG" id="mpo:Mpop_2872"/>
<dbReference type="eggNOG" id="COG3750">
    <property type="taxonomic scope" value="Bacteria"/>
</dbReference>
<dbReference type="HOGENOM" id="CLU_158651_3_0_5"/>
<dbReference type="OrthoDB" id="9813793at2"/>
<dbReference type="Proteomes" id="UP000007136">
    <property type="component" value="Chromosome"/>
</dbReference>
<dbReference type="GO" id="GO:0003677">
    <property type="term" value="F:DNA binding"/>
    <property type="evidence" value="ECO:0007669"/>
    <property type="project" value="InterPro"/>
</dbReference>
<dbReference type="HAMAP" id="MF_00797">
    <property type="entry name" value="UPF0335"/>
    <property type="match status" value="1"/>
</dbReference>
<dbReference type="InterPro" id="IPR018753">
    <property type="entry name" value="GapR-like"/>
</dbReference>
<dbReference type="InterPro" id="IPR046367">
    <property type="entry name" value="GapR-like_DNA-bd"/>
</dbReference>
<dbReference type="NCBIfam" id="NF010247">
    <property type="entry name" value="PRK13694.1"/>
    <property type="match status" value="1"/>
</dbReference>
<dbReference type="Pfam" id="PF10073">
    <property type="entry name" value="GapR_DNA-bd"/>
    <property type="match status" value="1"/>
</dbReference>
<proteinExistence type="inferred from homology"/>
<name>Y2872_METPB</name>